<protein>
    <recommendedName>
        <fullName evidence="1">Large ribosomal subunit protein bL25</fullName>
    </recommendedName>
    <alternativeName>
        <fullName evidence="2">50S ribosomal protein L25</fullName>
    </alternativeName>
</protein>
<accession>B4SYR0</accession>
<evidence type="ECO:0000255" key="1">
    <source>
        <dbReference type="HAMAP-Rule" id="MF_01336"/>
    </source>
</evidence>
<evidence type="ECO:0000305" key="2"/>
<comment type="function">
    <text evidence="1">This is one of the proteins that binds to the 5S RNA in the ribosome where it forms part of the central protuberance.</text>
</comment>
<comment type="subunit">
    <text evidence="1">Part of the 50S ribosomal subunit; part of the 5S rRNA/L5/L18/L25 subcomplex. Contacts the 5S rRNA. Binds to the 5S rRNA independently of L5 and L18.</text>
</comment>
<comment type="similarity">
    <text evidence="1">Belongs to the bacterial ribosomal protein bL25 family.</text>
</comment>
<sequence>MFTINAEVRKEQGKGASRRLRAANKFPAIIYGGSEAPIAIELDHDQVMNMQAKAEFYSEVLTLVVDGKEVKVKAQAVQRHAYKPKLTHIDFVRA</sequence>
<reference key="1">
    <citation type="journal article" date="2011" name="J. Bacteriol.">
        <title>Comparative genomics of 28 Salmonella enterica isolates: evidence for CRISPR-mediated adaptive sublineage evolution.</title>
        <authorList>
            <person name="Fricke W.F."/>
            <person name="Mammel M.K."/>
            <person name="McDermott P.F."/>
            <person name="Tartera C."/>
            <person name="White D.G."/>
            <person name="Leclerc J.E."/>
            <person name="Ravel J."/>
            <person name="Cebula T.A."/>
        </authorList>
    </citation>
    <scope>NUCLEOTIDE SEQUENCE [LARGE SCALE GENOMIC DNA]</scope>
    <source>
        <strain>SL254</strain>
    </source>
</reference>
<keyword id="KW-0687">Ribonucleoprotein</keyword>
<keyword id="KW-0689">Ribosomal protein</keyword>
<keyword id="KW-0694">RNA-binding</keyword>
<keyword id="KW-0699">rRNA-binding</keyword>
<organism>
    <name type="scientific">Salmonella newport (strain SL254)</name>
    <dbReference type="NCBI Taxonomy" id="423368"/>
    <lineage>
        <taxon>Bacteria</taxon>
        <taxon>Pseudomonadati</taxon>
        <taxon>Pseudomonadota</taxon>
        <taxon>Gammaproteobacteria</taxon>
        <taxon>Enterobacterales</taxon>
        <taxon>Enterobacteriaceae</taxon>
        <taxon>Salmonella</taxon>
    </lineage>
</organism>
<feature type="chain" id="PRO_1000142594" description="Large ribosomal subunit protein bL25">
    <location>
        <begin position="1"/>
        <end position="94"/>
    </location>
</feature>
<proteinExistence type="inferred from homology"/>
<name>RL25_SALNS</name>
<dbReference type="EMBL" id="CP001113">
    <property type="protein sequence ID" value="ACF61141.1"/>
    <property type="molecule type" value="Genomic_DNA"/>
</dbReference>
<dbReference type="RefSeq" id="WP_000494192.1">
    <property type="nucleotide sequence ID" value="NZ_CCMR01000002.1"/>
</dbReference>
<dbReference type="SMR" id="B4SYR0"/>
<dbReference type="KEGG" id="see:SNSL254_A2418"/>
<dbReference type="HOGENOM" id="CLU_137946_0_0_6"/>
<dbReference type="Proteomes" id="UP000008824">
    <property type="component" value="Chromosome"/>
</dbReference>
<dbReference type="GO" id="GO:0022625">
    <property type="term" value="C:cytosolic large ribosomal subunit"/>
    <property type="evidence" value="ECO:0007669"/>
    <property type="project" value="TreeGrafter"/>
</dbReference>
<dbReference type="GO" id="GO:0008097">
    <property type="term" value="F:5S rRNA binding"/>
    <property type="evidence" value="ECO:0007669"/>
    <property type="project" value="InterPro"/>
</dbReference>
<dbReference type="GO" id="GO:0003735">
    <property type="term" value="F:structural constituent of ribosome"/>
    <property type="evidence" value="ECO:0007669"/>
    <property type="project" value="InterPro"/>
</dbReference>
<dbReference type="GO" id="GO:0006412">
    <property type="term" value="P:translation"/>
    <property type="evidence" value="ECO:0007669"/>
    <property type="project" value="UniProtKB-UniRule"/>
</dbReference>
<dbReference type="CDD" id="cd00495">
    <property type="entry name" value="Ribosomal_L25_TL5_CTC"/>
    <property type="match status" value="1"/>
</dbReference>
<dbReference type="FunFam" id="2.40.240.10:FF:000002">
    <property type="entry name" value="50S ribosomal protein L25"/>
    <property type="match status" value="1"/>
</dbReference>
<dbReference type="Gene3D" id="2.40.240.10">
    <property type="entry name" value="Ribosomal Protein L25, Chain P"/>
    <property type="match status" value="1"/>
</dbReference>
<dbReference type="HAMAP" id="MF_01336">
    <property type="entry name" value="Ribosomal_bL25"/>
    <property type="match status" value="1"/>
</dbReference>
<dbReference type="InterPro" id="IPR020056">
    <property type="entry name" value="Rbsml_bL25/Gln-tRNA_synth_N"/>
</dbReference>
<dbReference type="InterPro" id="IPR011035">
    <property type="entry name" value="Ribosomal_bL25/Gln-tRNA_synth"/>
</dbReference>
<dbReference type="InterPro" id="IPR020055">
    <property type="entry name" value="Ribosomal_bL25_short"/>
</dbReference>
<dbReference type="InterPro" id="IPR029751">
    <property type="entry name" value="Ribosomal_L25_dom"/>
</dbReference>
<dbReference type="InterPro" id="IPR020930">
    <property type="entry name" value="Ribosomal_uL5_bac-type"/>
</dbReference>
<dbReference type="NCBIfam" id="NF004612">
    <property type="entry name" value="PRK05943.1"/>
    <property type="match status" value="1"/>
</dbReference>
<dbReference type="PANTHER" id="PTHR33284">
    <property type="entry name" value="RIBOSOMAL PROTEIN L25/GLN-TRNA SYNTHETASE, ANTI-CODON-BINDING DOMAIN-CONTAINING PROTEIN"/>
    <property type="match status" value="1"/>
</dbReference>
<dbReference type="PANTHER" id="PTHR33284:SF1">
    <property type="entry name" value="RIBOSOMAL PROTEIN L25_GLN-TRNA SYNTHETASE, ANTI-CODON-BINDING DOMAIN-CONTAINING PROTEIN"/>
    <property type="match status" value="1"/>
</dbReference>
<dbReference type="Pfam" id="PF01386">
    <property type="entry name" value="Ribosomal_L25p"/>
    <property type="match status" value="1"/>
</dbReference>
<dbReference type="SUPFAM" id="SSF50715">
    <property type="entry name" value="Ribosomal protein L25-like"/>
    <property type="match status" value="1"/>
</dbReference>
<gene>
    <name evidence="1" type="primary">rplY</name>
    <name type="ordered locus">SNSL254_A2418</name>
</gene>